<protein>
    <recommendedName>
        <fullName evidence="1">Transcription antitermination protein NusB</fullName>
    </recommendedName>
    <alternativeName>
        <fullName evidence="1">Antitermination factor NusB</fullName>
    </alternativeName>
</protein>
<comment type="function">
    <text evidence="1">Involved in transcription antitermination. Required for transcription of ribosomal RNA (rRNA) genes. Binds specifically to the boxA antiterminator sequence of the ribosomal RNA (rrn) operons.</text>
</comment>
<comment type="similarity">
    <text evidence="1">Belongs to the NusB family.</text>
</comment>
<name>NUSB_CAMHC</name>
<keyword id="KW-1185">Reference proteome</keyword>
<keyword id="KW-0694">RNA-binding</keyword>
<keyword id="KW-0804">Transcription</keyword>
<keyword id="KW-0889">Transcription antitermination</keyword>
<keyword id="KW-0805">Transcription regulation</keyword>
<gene>
    <name evidence="1" type="primary">nusB</name>
    <name type="ordered locus">CHAB381_0030</name>
</gene>
<reference key="1">
    <citation type="submission" date="2007-07" db="EMBL/GenBank/DDBJ databases">
        <title>Complete genome sequence of Campylobacter hominis ATCC BAA-381, a commensal isolated from the human gastrointestinal tract.</title>
        <authorList>
            <person name="Fouts D.E."/>
            <person name="Mongodin E.F."/>
            <person name="Puiu D."/>
            <person name="Sebastian Y."/>
            <person name="Miller W.G."/>
            <person name="Mandrell R.E."/>
            <person name="Nelson K.E."/>
        </authorList>
    </citation>
    <scope>NUCLEOTIDE SEQUENCE [LARGE SCALE GENOMIC DNA]</scope>
    <source>
        <strain>ATCC BAA-381 / DSM 21671 / CCUG 45161 / LMG 19568 / NCTC 13146 / CH001A</strain>
    </source>
</reference>
<feature type="chain" id="PRO_1000023722" description="Transcription antitermination protein NusB">
    <location>
        <begin position="1"/>
        <end position="131"/>
    </location>
</feature>
<sequence length="131" mass="15016">MATRHQVRNAVVSLLYAKEMGSEMNDFVSEYLEEKRIRNDQRKFADKLFNGVCKNVNQIDNELDKYLNEYKISQIGTVERAILRLGAYEIMYEAIDKAIIINEAIELAKELAGESSPKFINGVLDRIGKVK</sequence>
<accession>A7HZG1</accession>
<organism>
    <name type="scientific">Campylobacter hominis (strain ATCC BAA-381 / DSM 21671 / CCUG 45161 / LMG 19568 / NCTC 13146 / CH001A)</name>
    <dbReference type="NCBI Taxonomy" id="360107"/>
    <lineage>
        <taxon>Bacteria</taxon>
        <taxon>Pseudomonadati</taxon>
        <taxon>Campylobacterota</taxon>
        <taxon>Epsilonproteobacteria</taxon>
        <taxon>Campylobacterales</taxon>
        <taxon>Campylobacteraceae</taxon>
        <taxon>Campylobacter</taxon>
    </lineage>
</organism>
<dbReference type="EMBL" id="CP000776">
    <property type="protein sequence ID" value="ABS52198.1"/>
    <property type="molecule type" value="Genomic_DNA"/>
</dbReference>
<dbReference type="RefSeq" id="WP_011991499.1">
    <property type="nucleotide sequence ID" value="NC_009714.1"/>
</dbReference>
<dbReference type="SMR" id="A7HZG1"/>
<dbReference type="STRING" id="360107.CHAB381_0030"/>
<dbReference type="KEGG" id="cha:CHAB381_0030"/>
<dbReference type="eggNOG" id="COG0781">
    <property type="taxonomic scope" value="Bacteria"/>
</dbReference>
<dbReference type="HOGENOM" id="CLU_087843_3_3_7"/>
<dbReference type="OrthoDB" id="9797817at2"/>
<dbReference type="Proteomes" id="UP000002407">
    <property type="component" value="Chromosome"/>
</dbReference>
<dbReference type="GO" id="GO:0005829">
    <property type="term" value="C:cytosol"/>
    <property type="evidence" value="ECO:0007669"/>
    <property type="project" value="TreeGrafter"/>
</dbReference>
<dbReference type="GO" id="GO:0003723">
    <property type="term" value="F:RNA binding"/>
    <property type="evidence" value="ECO:0007669"/>
    <property type="project" value="UniProtKB-UniRule"/>
</dbReference>
<dbReference type="GO" id="GO:0006353">
    <property type="term" value="P:DNA-templated transcription termination"/>
    <property type="evidence" value="ECO:0007669"/>
    <property type="project" value="UniProtKB-UniRule"/>
</dbReference>
<dbReference type="GO" id="GO:0031564">
    <property type="term" value="P:transcription antitermination"/>
    <property type="evidence" value="ECO:0007669"/>
    <property type="project" value="UniProtKB-KW"/>
</dbReference>
<dbReference type="Gene3D" id="1.10.940.10">
    <property type="entry name" value="NusB-like"/>
    <property type="match status" value="1"/>
</dbReference>
<dbReference type="HAMAP" id="MF_00073">
    <property type="entry name" value="NusB"/>
    <property type="match status" value="1"/>
</dbReference>
<dbReference type="InterPro" id="IPR035926">
    <property type="entry name" value="NusB-like_sf"/>
</dbReference>
<dbReference type="InterPro" id="IPR011605">
    <property type="entry name" value="NusB_fam"/>
</dbReference>
<dbReference type="InterPro" id="IPR006027">
    <property type="entry name" value="NusB_RsmB_TIM44"/>
</dbReference>
<dbReference type="NCBIfam" id="TIGR01951">
    <property type="entry name" value="nusB"/>
    <property type="match status" value="1"/>
</dbReference>
<dbReference type="PANTHER" id="PTHR11078:SF3">
    <property type="entry name" value="ANTITERMINATION NUSB DOMAIN-CONTAINING PROTEIN"/>
    <property type="match status" value="1"/>
</dbReference>
<dbReference type="PANTHER" id="PTHR11078">
    <property type="entry name" value="N UTILIZATION SUBSTANCE PROTEIN B-RELATED"/>
    <property type="match status" value="1"/>
</dbReference>
<dbReference type="Pfam" id="PF01029">
    <property type="entry name" value="NusB"/>
    <property type="match status" value="1"/>
</dbReference>
<dbReference type="SUPFAM" id="SSF48013">
    <property type="entry name" value="NusB-like"/>
    <property type="match status" value="1"/>
</dbReference>
<evidence type="ECO:0000255" key="1">
    <source>
        <dbReference type="HAMAP-Rule" id="MF_00073"/>
    </source>
</evidence>
<proteinExistence type="inferred from homology"/>